<dbReference type="EC" id="2.3.1.117" evidence="1"/>
<dbReference type="EMBL" id="CU928160">
    <property type="protein sequence ID" value="CAQ97051.1"/>
    <property type="molecule type" value="Genomic_DNA"/>
</dbReference>
<dbReference type="RefSeq" id="WP_001186650.1">
    <property type="nucleotide sequence ID" value="NC_011741.1"/>
</dbReference>
<dbReference type="SMR" id="B7M1A5"/>
<dbReference type="GeneID" id="93777259"/>
<dbReference type="KEGG" id="ecr:ECIAI1_0163"/>
<dbReference type="HOGENOM" id="CLU_050859_0_1_6"/>
<dbReference type="UniPathway" id="UPA00034">
    <property type="reaction ID" value="UER00019"/>
</dbReference>
<dbReference type="GO" id="GO:0005737">
    <property type="term" value="C:cytoplasm"/>
    <property type="evidence" value="ECO:0007669"/>
    <property type="project" value="UniProtKB-SubCell"/>
</dbReference>
<dbReference type="GO" id="GO:0008666">
    <property type="term" value="F:2,3,4,5-tetrahydropyridine-2,6-dicarboxylate N-succinyltransferase activity"/>
    <property type="evidence" value="ECO:0007669"/>
    <property type="project" value="UniProtKB-UniRule"/>
</dbReference>
<dbReference type="GO" id="GO:0016779">
    <property type="term" value="F:nucleotidyltransferase activity"/>
    <property type="evidence" value="ECO:0007669"/>
    <property type="project" value="TreeGrafter"/>
</dbReference>
<dbReference type="GO" id="GO:0019877">
    <property type="term" value="P:diaminopimelate biosynthetic process"/>
    <property type="evidence" value="ECO:0007669"/>
    <property type="project" value="UniProtKB-UniRule"/>
</dbReference>
<dbReference type="GO" id="GO:0009089">
    <property type="term" value="P:lysine biosynthetic process via diaminopimelate"/>
    <property type="evidence" value="ECO:0007669"/>
    <property type="project" value="UniProtKB-UniRule"/>
</dbReference>
<dbReference type="CDD" id="cd03350">
    <property type="entry name" value="LbH_THP_succinylT"/>
    <property type="match status" value="1"/>
</dbReference>
<dbReference type="FunFam" id="1.10.166.10:FF:000001">
    <property type="entry name" value="2,3,4,5-tetrahydropyridine-2,6-dicarboxylate N-succinyltransferase"/>
    <property type="match status" value="1"/>
</dbReference>
<dbReference type="FunFam" id="2.160.10.10:FF:000004">
    <property type="entry name" value="2,3,4,5-tetrahydropyridine-2,6-dicarboxylate N-succinyltransferase"/>
    <property type="match status" value="1"/>
</dbReference>
<dbReference type="Gene3D" id="2.160.10.10">
    <property type="entry name" value="Hexapeptide repeat proteins"/>
    <property type="match status" value="1"/>
</dbReference>
<dbReference type="Gene3D" id="1.10.166.10">
    <property type="entry name" value="Tetrahydrodipicolinate-N-succinyltransferase, N-terminal domain"/>
    <property type="match status" value="1"/>
</dbReference>
<dbReference type="HAMAP" id="MF_00811">
    <property type="entry name" value="DapD"/>
    <property type="match status" value="1"/>
</dbReference>
<dbReference type="InterPro" id="IPR005664">
    <property type="entry name" value="DapD_Trfase_Hexpep_rpt_fam"/>
</dbReference>
<dbReference type="InterPro" id="IPR001451">
    <property type="entry name" value="Hexapep"/>
</dbReference>
<dbReference type="InterPro" id="IPR018357">
    <property type="entry name" value="Hexapep_transf_CS"/>
</dbReference>
<dbReference type="InterPro" id="IPR023180">
    <property type="entry name" value="THP_succinylTrfase_dom1"/>
</dbReference>
<dbReference type="InterPro" id="IPR037133">
    <property type="entry name" value="THP_succinylTrfase_N_sf"/>
</dbReference>
<dbReference type="InterPro" id="IPR011004">
    <property type="entry name" value="Trimer_LpxA-like_sf"/>
</dbReference>
<dbReference type="NCBIfam" id="TIGR00965">
    <property type="entry name" value="dapD"/>
    <property type="match status" value="1"/>
</dbReference>
<dbReference type="NCBIfam" id="NF008808">
    <property type="entry name" value="PRK11830.1"/>
    <property type="match status" value="1"/>
</dbReference>
<dbReference type="PANTHER" id="PTHR19136:SF52">
    <property type="entry name" value="2,3,4,5-TETRAHYDROPYRIDINE-2,6-DICARBOXYLATE N-SUCCINYLTRANSFERASE"/>
    <property type="match status" value="1"/>
</dbReference>
<dbReference type="PANTHER" id="PTHR19136">
    <property type="entry name" value="MOLYBDENUM COFACTOR GUANYLYLTRANSFERASE"/>
    <property type="match status" value="1"/>
</dbReference>
<dbReference type="Pfam" id="PF14602">
    <property type="entry name" value="Hexapep_2"/>
    <property type="match status" value="1"/>
</dbReference>
<dbReference type="Pfam" id="PF14805">
    <property type="entry name" value="THDPS_N_2"/>
    <property type="match status" value="1"/>
</dbReference>
<dbReference type="SUPFAM" id="SSF51161">
    <property type="entry name" value="Trimeric LpxA-like enzymes"/>
    <property type="match status" value="1"/>
</dbReference>
<dbReference type="PROSITE" id="PS00101">
    <property type="entry name" value="HEXAPEP_TRANSFERASES"/>
    <property type="match status" value="1"/>
</dbReference>
<organism>
    <name type="scientific">Escherichia coli O8 (strain IAI1)</name>
    <dbReference type="NCBI Taxonomy" id="585034"/>
    <lineage>
        <taxon>Bacteria</taxon>
        <taxon>Pseudomonadati</taxon>
        <taxon>Pseudomonadota</taxon>
        <taxon>Gammaproteobacteria</taxon>
        <taxon>Enterobacterales</taxon>
        <taxon>Enterobacteriaceae</taxon>
        <taxon>Escherichia</taxon>
    </lineage>
</organism>
<gene>
    <name evidence="1" type="primary">dapD</name>
    <name type="ordered locus">ECIAI1_0163</name>
</gene>
<comment type="catalytic activity">
    <reaction evidence="1">
        <text>(S)-2,3,4,5-tetrahydrodipicolinate + succinyl-CoA + H2O = (S)-2-succinylamino-6-oxoheptanedioate + CoA</text>
        <dbReference type="Rhea" id="RHEA:17325"/>
        <dbReference type="ChEBI" id="CHEBI:15377"/>
        <dbReference type="ChEBI" id="CHEBI:15685"/>
        <dbReference type="ChEBI" id="CHEBI:16845"/>
        <dbReference type="ChEBI" id="CHEBI:57287"/>
        <dbReference type="ChEBI" id="CHEBI:57292"/>
        <dbReference type="EC" id="2.3.1.117"/>
    </reaction>
</comment>
<comment type="pathway">
    <text evidence="1">Amino-acid biosynthesis; L-lysine biosynthesis via DAP pathway; LL-2,6-diaminopimelate from (S)-tetrahydrodipicolinate (succinylase route): step 1/3.</text>
</comment>
<comment type="subcellular location">
    <subcellularLocation>
        <location evidence="1">Cytoplasm</location>
    </subcellularLocation>
</comment>
<comment type="similarity">
    <text evidence="1">Belongs to the transferase hexapeptide repeat family.</text>
</comment>
<proteinExistence type="inferred from homology"/>
<accession>B7M1A5</accession>
<sequence length="274" mass="29892">MQQLQNIIETAFERRAEITPANADTVTREAVNQVIALLDSGALRVAEKIDGQWVTHQWLKKAVLLSFRINDNQVIEGAESRYFDKVPMKFADYDEARFQKEGFRVVPPAAVRQGAFIARNTVLMPSYVNIGAYVDEGTMVDTWATVGSCAQIGKNVHLSGGVGIGGVLEPLQANPTIIEDNCFIGARSEVVEGVIVEEGSVISMGVYIGQSTRIYDRETGEIHYGRVPAGSVVVSGNLPSKDGKYSLYCAVIVKKVDAKTRGKVGINELLRTID</sequence>
<keyword id="KW-0012">Acyltransferase</keyword>
<keyword id="KW-0028">Amino-acid biosynthesis</keyword>
<keyword id="KW-0963">Cytoplasm</keyword>
<keyword id="KW-0220">Diaminopimelate biosynthesis</keyword>
<keyword id="KW-0457">Lysine biosynthesis</keyword>
<keyword id="KW-0677">Repeat</keyword>
<keyword id="KW-0808">Transferase</keyword>
<name>DAPD_ECO8A</name>
<reference key="1">
    <citation type="journal article" date="2009" name="PLoS Genet.">
        <title>Organised genome dynamics in the Escherichia coli species results in highly diverse adaptive paths.</title>
        <authorList>
            <person name="Touchon M."/>
            <person name="Hoede C."/>
            <person name="Tenaillon O."/>
            <person name="Barbe V."/>
            <person name="Baeriswyl S."/>
            <person name="Bidet P."/>
            <person name="Bingen E."/>
            <person name="Bonacorsi S."/>
            <person name="Bouchier C."/>
            <person name="Bouvet O."/>
            <person name="Calteau A."/>
            <person name="Chiapello H."/>
            <person name="Clermont O."/>
            <person name="Cruveiller S."/>
            <person name="Danchin A."/>
            <person name="Diard M."/>
            <person name="Dossat C."/>
            <person name="Karoui M.E."/>
            <person name="Frapy E."/>
            <person name="Garry L."/>
            <person name="Ghigo J.M."/>
            <person name="Gilles A.M."/>
            <person name="Johnson J."/>
            <person name="Le Bouguenec C."/>
            <person name="Lescat M."/>
            <person name="Mangenot S."/>
            <person name="Martinez-Jehanne V."/>
            <person name="Matic I."/>
            <person name="Nassif X."/>
            <person name="Oztas S."/>
            <person name="Petit M.A."/>
            <person name="Pichon C."/>
            <person name="Rouy Z."/>
            <person name="Ruf C.S."/>
            <person name="Schneider D."/>
            <person name="Tourret J."/>
            <person name="Vacherie B."/>
            <person name="Vallenet D."/>
            <person name="Medigue C."/>
            <person name="Rocha E.P.C."/>
            <person name="Denamur E."/>
        </authorList>
    </citation>
    <scope>NUCLEOTIDE SEQUENCE [LARGE SCALE GENOMIC DNA]</scope>
    <source>
        <strain>IAI1</strain>
    </source>
</reference>
<feature type="chain" id="PRO_1000134044" description="2,3,4,5-tetrahydropyridine-2,6-dicarboxylate N-succinyltransferase">
    <location>
        <begin position="1"/>
        <end position="274"/>
    </location>
</feature>
<evidence type="ECO:0000255" key="1">
    <source>
        <dbReference type="HAMAP-Rule" id="MF_00811"/>
    </source>
</evidence>
<protein>
    <recommendedName>
        <fullName evidence="1">2,3,4,5-tetrahydropyridine-2,6-dicarboxylate N-succinyltransferase</fullName>
        <ecNumber evidence="1">2.3.1.117</ecNumber>
    </recommendedName>
    <alternativeName>
        <fullName evidence="1">Tetrahydrodipicolinate N-succinyltransferase</fullName>
        <shortName evidence="1">THP succinyltransferase</shortName>
        <shortName evidence="1">Tetrahydropicolinate succinylase</shortName>
    </alternativeName>
</protein>